<proteinExistence type="evidence at transcript level"/>
<protein>
    <recommendedName>
        <fullName>Hemoglobin subunit gamma-2</fullName>
    </recommendedName>
    <alternativeName>
        <fullName>Gamma-2-globin</fullName>
    </alternativeName>
    <alternativeName>
        <fullName>Hemoglobin gamma-2 chain</fullName>
    </alternativeName>
</protein>
<sequence>MSNFTAEDKAAITSLWAKVNVEDAGGETLGRLLVVYPWTQRFFDSFGSLSSPSAIMGNPKVKAHGAKVLTSLGEAIKNLDDLKGTFGQLSELHCDKLHVDPENFRLLGNVLVTVLAIHHGKEFTPEVQASWQKMVAGVASALGSRYH</sequence>
<name>HBG2_SAPAP</name>
<comment type="function">
    <text evidence="2">Gamma chains make up the fetal hemoglobin F, in combination with alpha chains.</text>
</comment>
<comment type="subunit">
    <text evidence="2">Heterotetramer of two alpha chains and two gamma chains in fetal hemoglobin (Hb F).</text>
</comment>
<comment type="tissue specificity">
    <text>Red blood cells.</text>
</comment>
<comment type="similarity">
    <text evidence="3">Belongs to the globin family.</text>
</comment>
<feature type="chain" id="PRO_0000053245" description="Hemoglobin subunit gamma-2">
    <location>
        <begin position="1"/>
        <end position="147"/>
    </location>
</feature>
<feature type="domain" description="Globin" evidence="3">
    <location>
        <begin position="3"/>
        <end position="147"/>
    </location>
</feature>
<feature type="binding site" description="distal binding residue" evidence="3">
    <location>
        <position position="64"/>
    </location>
    <ligand>
        <name>heme b</name>
        <dbReference type="ChEBI" id="CHEBI:60344"/>
    </ligand>
    <ligandPart>
        <name>Fe</name>
        <dbReference type="ChEBI" id="CHEBI:18248"/>
    </ligandPart>
</feature>
<feature type="binding site" description="proximal binding residue" evidence="3">
    <location>
        <position position="93"/>
    </location>
    <ligand>
        <name>heme b</name>
        <dbReference type="ChEBI" id="CHEBI:60344"/>
    </ligand>
    <ligandPart>
        <name>Fe</name>
        <dbReference type="ChEBI" id="CHEBI:18248"/>
    </ligandPart>
</feature>
<feature type="modified residue" description="Phosphothreonine" evidence="1">
    <location>
        <position position="13"/>
    </location>
</feature>
<feature type="modified residue" description="Phosphoserine" evidence="2">
    <location>
        <position position="45"/>
    </location>
</feature>
<feature type="modified residue" description="Phosphoserine" evidence="2">
    <location>
        <position position="51"/>
    </location>
</feature>
<feature type="modified residue" description="Phosphoserine" evidence="2">
    <location>
        <position position="53"/>
    </location>
</feature>
<feature type="modified residue" description="N6-acetyllysine" evidence="1">
    <location>
        <position position="60"/>
    </location>
</feature>
<feature type="modified residue" description="N6-acetyllysine" evidence="1">
    <location>
        <position position="83"/>
    </location>
</feature>
<feature type="modified residue" description="S-nitrosocysteine" evidence="1">
    <location>
        <position position="94"/>
    </location>
</feature>
<feature type="modified residue" description="Phosphoserine" evidence="2">
    <location>
        <position position="140"/>
    </location>
</feature>
<feature type="modified residue" description="Phosphoserine" evidence="2">
    <location>
        <position position="144"/>
    </location>
</feature>
<accession>P68257</accession>
<accession>Q28225</accession>
<accession>Q29434</accession>
<keyword id="KW-0007">Acetylation</keyword>
<keyword id="KW-0349">Heme</keyword>
<keyword id="KW-0408">Iron</keyword>
<keyword id="KW-0479">Metal-binding</keyword>
<keyword id="KW-0561">Oxygen transport</keyword>
<keyword id="KW-0597">Phosphoprotein</keyword>
<keyword id="KW-1185">Reference proteome</keyword>
<keyword id="KW-0702">S-nitrosylation</keyword>
<keyword id="KW-0813">Transport</keyword>
<organism>
    <name type="scientific">Sapajus apella</name>
    <name type="common">Brown-capped capuchin</name>
    <name type="synonym">Cebus apella</name>
    <dbReference type="NCBI Taxonomy" id="9515"/>
    <lineage>
        <taxon>Eukaryota</taxon>
        <taxon>Metazoa</taxon>
        <taxon>Chordata</taxon>
        <taxon>Craniata</taxon>
        <taxon>Vertebrata</taxon>
        <taxon>Euteleostomi</taxon>
        <taxon>Mammalia</taxon>
        <taxon>Eutheria</taxon>
        <taxon>Euarchontoglires</taxon>
        <taxon>Primates</taxon>
        <taxon>Haplorrhini</taxon>
        <taxon>Platyrrhini</taxon>
        <taxon>Cebidae</taxon>
        <taxon>Cebinae</taxon>
        <taxon>Sapajus</taxon>
    </lineage>
</organism>
<evidence type="ECO:0000250" key="1">
    <source>
        <dbReference type="UniProtKB" id="P68871"/>
    </source>
</evidence>
<evidence type="ECO:0000250" key="2">
    <source>
        <dbReference type="UniProtKB" id="P69892"/>
    </source>
</evidence>
<evidence type="ECO:0000255" key="3">
    <source>
        <dbReference type="PROSITE-ProRule" id="PRU00238"/>
    </source>
</evidence>
<gene>
    <name type="primary">HBG2</name>
</gene>
<reference key="1">
    <citation type="journal article" date="1996" name="Proc. Natl. Acad. Sci. U.S.A.">
        <title>Reduction of two functional gamma-globin genes to one: an evolutionary trend in New World monkeys (infraorder Platyrrhini).</title>
        <authorList>
            <person name="Chiu C.-H."/>
            <person name="Schneider H."/>
            <person name="Schneider M.P.C."/>
            <person name="Sampaio I."/>
            <person name="Meireles C.M."/>
            <person name="Slightom J.L."/>
            <person name="Gumucio D.L."/>
            <person name="Goodman M."/>
        </authorList>
    </citation>
    <scope>NUCLEOTIDE SEQUENCE [GENOMIC DNA]</scope>
</reference>
<dbReference type="EMBL" id="U57045">
    <property type="protein sequence ID" value="AAC50636.1"/>
    <property type="molecule type" value="Genomic_DNA"/>
</dbReference>
<dbReference type="PIR" id="G00015">
    <property type="entry name" value="G00015"/>
</dbReference>
<dbReference type="SMR" id="P68257"/>
<dbReference type="Proteomes" id="UP000504640">
    <property type="component" value="Unplaced"/>
</dbReference>
<dbReference type="GO" id="GO:0072562">
    <property type="term" value="C:blood microparticle"/>
    <property type="evidence" value="ECO:0007669"/>
    <property type="project" value="TreeGrafter"/>
</dbReference>
<dbReference type="GO" id="GO:0031838">
    <property type="term" value="C:haptoglobin-hemoglobin complex"/>
    <property type="evidence" value="ECO:0007669"/>
    <property type="project" value="TreeGrafter"/>
</dbReference>
<dbReference type="GO" id="GO:0005833">
    <property type="term" value="C:hemoglobin complex"/>
    <property type="evidence" value="ECO:0007669"/>
    <property type="project" value="InterPro"/>
</dbReference>
<dbReference type="GO" id="GO:0031720">
    <property type="term" value="F:haptoglobin binding"/>
    <property type="evidence" value="ECO:0007669"/>
    <property type="project" value="TreeGrafter"/>
</dbReference>
<dbReference type="GO" id="GO:0020037">
    <property type="term" value="F:heme binding"/>
    <property type="evidence" value="ECO:0007669"/>
    <property type="project" value="InterPro"/>
</dbReference>
<dbReference type="GO" id="GO:0031721">
    <property type="term" value="F:hemoglobin alpha binding"/>
    <property type="evidence" value="ECO:0007669"/>
    <property type="project" value="TreeGrafter"/>
</dbReference>
<dbReference type="GO" id="GO:0046872">
    <property type="term" value="F:metal ion binding"/>
    <property type="evidence" value="ECO:0007669"/>
    <property type="project" value="UniProtKB-KW"/>
</dbReference>
<dbReference type="GO" id="GO:0043177">
    <property type="term" value="F:organic acid binding"/>
    <property type="evidence" value="ECO:0007669"/>
    <property type="project" value="TreeGrafter"/>
</dbReference>
<dbReference type="GO" id="GO:0019825">
    <property type="term" value="F:oxygen binding"/>
    <property type="evidence" value="ECO:0007669"/>
    <property type="project" value="InterPro"/>
</dbReference>
<dbReference type="GO" id="GO:0005344">
    <property type="term" value="F:oxygen carrier activity"/>
    <property type="evidence" value="ECO:0007669"/>
    <property type="project" value="UniProtKB-KW"/>
</dbReference>
<dbReference type="GO" id="GO:0004601">
    <property type="term" value="F:peroxidase activity"/>
    <property type="evidence" value="ECO:0007669"/>
    <property type="project" value="TreeGrafter"/>
</dbReference>
<dbReference type="GO" id="GO:0042744">
    <property type="term" value="P:hydrogen peroxide catabolic process"/>
    <property type="evidence" value="ECO:0007669"/>
    <property type="project" value="TreeGrafter"/>
</dbReference>
<dbReference type="CDD" id="cd08925">
    <property type="entry name" value="Hb-beta-like"/>
    <property type="match status" value="1"/>
</dbReference>
<dbReference type="FunFam" id="1.10.490.10:FF:000001">
    <property type="entry name" value="Hemoglobin subunit beta"/>
    <property type="match status" value="1"/>
</dbReference>
<dbReference type="Gene3D" id="1.10.490.10">
    <property type="entry name" value="Globins"/>
    <property type="match status" value="1"/>
</dbReference>
<dbReference type="InterPro" id="IPR000971">
    <property type="entry name" value="Globin"/>
</dbReference>
<dbReference type="InterPro" id="IPR009050">
    <property type="entry name" value="Globin-like_sf"/>
</dbReference>
<dbReference type="InterPro" id="IPR012292">
    <property type="entry name" value="Globin/Proto"/>
</dbReference>
<dbReference type="InterPro" id="IPR002337">
    <property type="entry name" value="Hemoglobin_b"/>
</dbReference>
<dbReference type="InterPro" id="IPR050056">
    <property type="entry name" value="Hemoglobin_oxygen_transport"/>
</dbReference>
<dbReference type="PANTHER" id="PTHR11442">
    <property type="entry name" value="HEMOGLOBIN FAMILY MEMBER"/>
    <property type="match status" value="1"/>
</dbReference>
<dbReference type="PANTHER" id="PTHR11442:SF52">
    <property type="entry name" value="HEMOGLOBIN SUBUNIT GAMMA-1"/>
    <property type="match status" value="1"/>
</dbReference>
<dbReference type="Pfam" id="PF00042">
    <property type="entry name" value="Globin"/>
    <property type="match status" value="1"/>
</dbReference>
<dbReference type="PRINTS" id="PR00814">
    <property type="entry name" value="BETAHAEM"/>
</dbReference>
<dbReference type="SUPFAM" id="SSF46458">
    <property type="entry name" value="Globin-like"/>
    <property type="match status" value="1"/>
</dbReference>
<dbReference type="PROSITE" id="PS01033">
    <property type="entry name" value="GLOBIN"/>
    <property type="match status" value="1"/>
</dbReference>